<feature type="signal peptide" evidence="2">
    <location>
        <begin position="1"/>
        <end position="19"/>
    </location>
</feature>
<feature type="chain" id="PRO_0000333410" description="Protein ROT1">
    <location>
        <begin position="20"/>
        <end position="244"/>
    </location>
</feature>
<feature type="topological domain" description="Lumenal" evidence="2">
    <location>
        <begin position="20"/>
        <end position="222"/>
    </location>
</feature>
<feature type="transmembrane region" description="Helical" evidence="2">
    <location>
        <begin position="223"/>
        <end position="243"/>
    </location>
</feature>
<feature type="topological domain" description="Cytoplasmic" evidence="2">
    <location>
        <position position="244"/>
    </location>
</feature>
<feature type="glycosylation site" description="N-linked (GlcNAc...) asparagine" evidence="2">
    <location>
        <position position="81"/>
    </location>
</feature>
<feature type="glycosylation site" description="N-linked (GlcNAc...) asparagine" evidence="2">
    <location>
        <position position="101"/>
    </location>
</feature>
<protein>
    <recommendedName>
        <fullName>Protein ROT1</fullName>
    </recommendedName>
</protein>
<sequence length="244" mass="27646">MMIFSFLVTFFILGAQVLGENMKELVGTWSSKSNTVFTGPGFYDPVSELLIEPDLPGISYSFTEDGHYEEALYRVTSNPKNHSCPTATLIYQHGTYEIKSNGSLFMTPIAVDGRQLLSDPCGVDTENDASLYSRYVQKTWFKKFQVMVDSYNGRRKLQIYQFDGSPMQPLYLAYKPPMMLPTSALNPTDSASETKSSLRKRIKRSLENQYRTNARIETSSAKYEFWWWTAIAGIGLGSAVIFLH</sequence>
<keyword id="KW-0256">Endoplasmic reticulum</keyword>
<keyword id="KW-0325">Glycoprotein</keyword>
<keyword id="KW-0472">Membrane</keyword>
<keyword id="KW-1185">Reference proteome</keyword>
<keyword id="KW-0732">Signal</keyword>
<keyword id="KW-0812">Transmembrane</keyword>
<keyword id="KW-1133">Transmembrane helix</keyword>
<organism>
    <name type="scientific">Debaryomyces hansenii (strain ATCC 36239 / CBS 767 / BCRC 21394 / JCM 1990 / NBRC 0083 / IGC 2968)</name>
    <name type="common">Yeast</name>
    <name type="synonym">Torulaspora hansenii</name>
    <dbReference type="NCBI Taxonomy" id="284592"/>
    <lineage>
        <taxon>Eukaryota</taxon>
        <taxon>Fungi</taxon>
        <taxon>Dikarya</taxon>
        <taxon>Ascomycota</taxon>
        <taxon>Saccharomycotina</taxon>
        <taxon>Pichiomycetes</taxon>
        <taxon>Debaryomycetaceae</taxon>
        <taxon>Debaryomyces</taxon>
    </lineage>
</organism>
<comment type="function">
    <text evidence="1">Required for normal levels of the cell wall 1,6-beta-glucan. Involved in a protein folding machinery chaperoning proteins acting in various physiological processes including cell wall synthesis and lysis of autophagic bodies (By similarity).</text>
</comment>
<comment type="subcellular location">
    <subcellularLocation>
        <location evidence="1">Endoplasmic reticulum membrane</location>
        <topology evidence="1">Single-pass type I membrane protein</topology>
    </subcellularLocation>
</comment>
<comment type="similarity">
    <text evidence="3">Belongs to the ROT1 family.</text>
</comment>
<evidence type="ECO:0000250" key="1"/>
<evidence type="ECO:0000255" key="2"/>
<evidence type="ECO:0000305" key="3"/>
<dbReference type="EMBL" id="CR382136">
    <property type="protein sequence ID" value="CAG87037.1"/>
    <property type="molecule type" value="Genomic_DNA"/>
</dbReference>
<dbReference type="RefSeq" id="XP_458885.1">
    <property type="nucleotide sequence ID" value="XM_458885.1"/>
</dbReference>
<dbReference type="FunCoup" id="Q6BSD5">
    <property type="interactions" value="34"/>
</dbReference>
<dbReference type="STRING" id="284592.Q6BSD5"/>
<dbReference type="GlyCosmos" id="Q6BSD5">
    <property type="glycosylation" value="2 sites, No reported glycans"/>
</dbReference>
<dbReference type="GeneID" id="2901336"/>
<dbReference type="KEGG" id="dha:DEHA2D09658g"/>
<dbReference type="VEuPathDB" id="FungiDB:DEHA2D09658g"/>
<dbReference type="eggNOG" id="ENOG502QQTG">
    <property type="taxonomic scope" value="Eukaryota"/>
</dbReference>
<dbReference type="HOGENOM" id="CLU_071622_0_0_1"/>
<dbReference type="InParanoid" id="Q6BSD5"/>
<dbReference type="OMA" id="YKPPQML"/>
<dbReference type="OrthoDB" id="5327821at2759"/>
<dbReference type="Proteomes" id="UP000000599">
    <property type="component" value="Chromosome D"/>
</dbReference>
<dbReference type="GO" id="GO:0005789">
    <property type="term" value="C:endoplasmic reticulum membrane"/>
    <property type="evidence" value="ECO:0007669"/>
    <property type="project" value="UniProtKB-SubCell"/>
</dbReference>
<dbReference type="GO" id="GO:0051082">
    <property type="term" value="F:unfolded protein binding"/>
    <property type="evidence" value="ECO:0007669"/>
    <property type="project" value="TreeGrafter"/>
</dbReference>
<dbReference type="GO" id="GO:0006458">
    <property type="term" value="P:'de novo' protein folding"/>
    <property type="evidence" value="ECO:0007669"/>
    <property type="project" value="InterPro"/>
</dbReference>
<dbReference type="GO" id="GO:0007118">
    <property type="term" value="P:budding cell apical bud growth"/>
    <property type="evidence" value="ECO:0007669"/>
    <property type="project" value="TreeGrafter"/>
</dbReference>
<dbReference type="InterPro" id="IPR019623">
    <property type="entry name" value="Rot1"/>
</dbReference>
<dbReference type="PANTHER" id="PTHR28090">
    <property type="entry name" value="PROTEIN ROT1"/>
    <property type="match status" value="1"/>
</dbReference>
<dbReference type="PANTHER" id="PTHR28090:SF1">
    <property type="entry name" value="PROTEIN ROT1"/>
    <property type="match status" value="1"/>
</dbReference>
<dbReference type="Pfam" id="PF10681">
    <property type="entry name" value="Rot1"/>
    <property type="match status" value="1"/>
</dbReference>
<dbReference type="PIRSF" id="PIRSF017290">
    <property type="entry name" value="ROT1_prd"/>
    <property type="match status" value="1"/>
</dbReference>
<gene>
    <name type="primary">ROT1</name>
    <name type="ordered locus">DEHA2D09658g</name>
</gene>
<reference key="1">
    <citation type="journal article" date="2004" name="Nature">
        <title>Genome evolution in yeasts.</title>
        <authorList>
            <person name="Dujon B."/>
            <person name="Sherman D."/>
            <person name="Fischer G."/>
            <person name="Durrens P."/>
            <person name="Casaregola S."/>
            <person name="Lafontaine I."/>
            <person name="de Montigny J."/>
            <person name="Marck C."/>
            <person name="Neuveglise C."/>
            <person name="Talla E."/>
            <person name="Goffard N."/>
            <person name="Frangeul L."/>
            <person name="Aigle M."/>
            <person name="Anthouard V."/>
            <person name="Babour A."/>
            <person name="Barbe V."/>
            <person name="Barnay S."/>
            <person name="Blanchin S."/>
            <person name="Beckerich J.-M."/>
            <person name="Beyne E."/>
            <person name="Bleykasten C."/>
            <person name="Boisrame A."/>
            <person name="Boyer J."/>
            <person name="Cattolico L."/>
            <person name="Confanioleri F."/>
            <person name="de Daruvar A."/>
            <person name="Despons L."/>
            <person name="Fabre E."/>
            <person name="Fairhead C."/>
            <person name="Ferry-Dumazet H."/>
            <person name="Groppi A."/>
            <person name="Hantraye F."/>
            <person name="Hennequin C."/>
            <person name="Jauniaux N."/>
            <person name="Joyet P."/>
            <person name="Kachouri R."/>
            <person name="Kerrest A."/>
            <person name="Koszul R."/>
            <person name="Lemaire M."/>
            <person name="Lesur I."/>
            <person name="Ma L."/>
            <person name="Muller H."/>
            <person name="Nicaud J.-M."/>
            <person name="Nikolski M."/>
            <person name="Oztas S."/>
            <person name="Ozier-Kalogeropoulos O."/>
            <person name="Pellenz S."/>
            <person name="Potier S."/>
            <person name="Richard G.-F."/>
            <person name="Straub M.-L."/>
            <person name="Suleau A."/>
            <person name="Swennen D."/>
            <person name="Tekaia F."/>
            <person name="Wesolowski-Louvel M."/>
            <person name="Westhof E."/>
            <person name="Wirth B."/>
            <person name="Zeniou-Meyer M."/>
            <person name="Zivanovic Y."/>
            <person name="Bolotin-Fukuhara M."/>
            <person name="Thierry A."/>
            <person name="Bouchier C."/>
            <person name="Caudron B."/>
            <person name="Scarpelli C."/>
            <person name="Gaillardin C."/>
            <person name="Weissenbach J."/>
            <person name="Wincker P."/>
            <person name="Souciet J.-L."/>
        </authorList>
    </citation>
    <scope>NUCLEOTIDE SEQUENCE [LARGE SCALE GENOMIC DNA]</scope>
    <source>
        <strain>ATCC 36239 / CBS 767 / BCRC 21394 / JCM 1990 / NBRC 0083 / IGC 2968</strain>
    </source>
</reference>
<name>ROT1_DEBHA</name>
<accession>Q6BSD5</accession>
<proteinExistence type="inferred from homology"/>